<accession>Q32H03</accession>
<reference key="1">
    <citation type="journal article" date="2005" name="Nucleic Acids Res.">
        <title>Genome dynamics and diversity of Shigella species, the etiologic agents of bacillary dysentery.</title>
        <authorList>
            <person name="Yang F."/>
            <person name="Yang J."/>
            <person name="Zhang X."/>
            <person name="Chen L."/>
            <person name="Jiang Y."/>
            <person name="Yan Y."/>
            <person name="Tang X."/>
            <person name="Wang J."/>
            <person name="Xiong Z."/>
            <person name="Dong J."/>
            <person name="Xue Y."/>
            <person name="Zhu Y."/>
            <person name="Xu X."/>
            <person name="Sun L."/>
            <person name="Chen S."/>
            <person name="Nie H."/>
            <person name="Peng J."/>
            <person name="Xu J."/>
            <person name="Wang Y."/>
            <person name="Yuan Z."/>
            <person name="Wen Y."/>
            <person name="Yao Z."/>
            <person name="Shen Y."/>
            <person name="Qiang B."/>
            <person name="Hou Y."/>
            <person name="Yu J."/>
            <person name="Jin Q."/>
        </authorList>
    </citation>
    <scope>NUCLEOTIDE SEQUENCE [LARGE SCALE GENOMIC DNA]</scope>
    <source>
        <strain>Sd197</strain>
    </source>
</reference>
<name>PTH_SHIDS</name>
<proteinExistence type="inferred from homology"/>
<sequence>MTIKLIVGLANPGAEYAATRHNAGAWFVDLLAERLRAPLREEAKFFGYTSRVTLGGEDVRLLVPTTFMNLSGKAVAAMASFFRINPDEILVVHDELDLPPGVAKFKLGGGHGGHNGLKDIISKLGNNPNFHRLRIGIGHPGDKNKVVGFVLGKPPVSEQKLIDEAIDEAVRCTEMWFTDGLTKATNRLHAFKAQ</sequence>
<feature type="chain" id="PRO_0000264107" description="Peptidyl-tRNA hydrolase">
    <location>
        <begin position="1"/>
        <end position="194"/>
    </location>
</feature>
<feature type="active site" description="Proton acceptor" evidence="1">
    <location>
        <position position="21"/>
    </location>
</feature>
<feature type="binding site" evidence="1">
    <location>
        <position position="16"/>
    </location>
    <ligand>
        <name>tRNA</name>
        <dbReference type="ChEBI" id="CHEBI:17843"/>
    </ligand>
</feature>
<feature type="binding site" evidence="1">
    <location>
        <position position="67"/>
    </location>
    <ligand>
        <name>tRNA</name>
        <dbReference type="ChEBI" id="CHEBI:17843"/>
    </ligand>
</feature>
<feature type="binding site" evidence="1">
    <location>
        <position position="69"/>
    </location>
    <ligand>
        <name>tRNA</name>
        <dbReference type="ChEBI" id="CHEBI:17843"/>
    </ligand>
</feature>
<feature type="binding site" evidence="1">
    <location>
        <position position="115"/>
    </location>
    <ligand>
        <name>tRNA</name>
        <dbReference type="ChEBI" id="CHEBI:17843"/>
    </ligand>
</feature>
<feature type="site" description="Discriminates between blocked and unblocked aminoacyl-tRNA" evidence="1">
    <location>
        <position position="11"/>
    </location>
</feature>
<feature type="site" description="Stabilizes the basic form of H active site to accept a proton" evidence="1">
    <location>
        <position position="94"/>
    </location>
</feature>
<keyword id="KW-0963">Cytoplasm</keyword>
<keyword id="KW-0378">Hydrolase</keyword>
<keyword id="KW-1185">Reference proteome</keyword>
<keyword id="KW-0694">RNA-binding</keyword>
<keyword id="KW-0820">tRNA-binding</keyword>
<dbReference type="EC" id="3.1.1.29" evidence="1"/>
<dbReference type="EMBL" id="CP000034">
    <property type="protein sequence ID" value="ABB61402.1"/>
    <property type="molecule type" value="Genomic_DNA"/>
</dbReference>
<dbReference type="RefSeq" id="WP_000152942.1">
    <property type="nucleotide sequence ID" value="NC_007606.1"/>
</dbReference>
<dbReference type="RefSeq" id="YP_402893.1">
    <property type="nucleotide sequence ID" value="NC_007606.1"/>
</dbReference>
<dbReference type="SMR" id="Q32H03"/>
<dbReference type="STRING" id="300267.SDY_1253"/>
<dbReference type="EnsemblBacteria" id="ABB61402">
    <property type="protein sequence ID" value="ABB61402"/>
    <property type="gene ID" value="SDY_1253"/>
</dbReference>
<dbReference type="KEGG" id="sdy:SDY_1253"/>
<dbReference type="PATRIC" id="fig|300267.13.peg.1490"/>
<dbReference type="HOGENOM" id="CLU_062456_3_1_6"/>
<dbReference type="Proteomes" id="UP000002716">
    <property type="component" value="Chromosome"/>
</dbReference>
<dbReference type="GO" id="GO:0005737">
    <property type="term" value="C:cytoplasm"/>
    <property type="evidence" value="ECO:0007669"/>
    <property type="project" value="UniProtKB-SubCell"/>
</dbReference>
<dbReference type="GO" id="GO:0004045">
    <property type="term" value="F:peptidyl-tRNA hydrolase activity"/>
    <property type="evidence" value="ECO:0007669"/>
    <property type="project" value="UniProtKB-UniRule"/>
</dbReference>
<dbReference type="GO" id="GO:0000049">
    <property type="term" value="F:tRNA binding"/>
    <property type="evidence" value="ECO:0007669"/>
    <property type="project" value="UniProtKB-UniRule"/>
</dbReference>
<dbReference type="GO" id="GO:0006515">
    <property type="term" value="P:protein quality control for misfolded or incompletely synthesized proteins"/>
    <property type="evidence" value="ECO:0007669"/>
    <property type="project" value="UniProtKB-UniRule"/>
</dbReference>
<dbReference type="GO" id="GO:0072344">
    <property type="term" value="P:rescue of stalled ribosome"/>
    <property type="evidence" value="ECO:0007669"/>
    <property type="project" value="UniProtKB-UniRule"/>
</dbReference>
<dbReference type="CDD" id="cd00462">
    <property type="entry name" value="PTH"/>
    <property type="match status" value="1"/>
</dbReference>
<dbReference type="FunFam" id="3.40.50.1470:FF:000001">
    <property type="entry name" value="Peptidyl-tRNA hydrolase"/>
    <property type="match status" value="1"/>
</dbReference>
<dbReference type="Gene3D" id="3.40.50.1470">
    <property type="entry name" value="Peptidyl-tRNA hydrolase"/>
    <property type="match status" value="1"/>
</dbReference>
<dbReference type="HAMAP" id="MF_00083">
    <property type="entry name" value="Pept_tRNA_hydro_bact"/>
    <property type="match status" value="1"/>
</dbReference>
<dbReference type="InterPro" id="IPR001328">
    <property type="entry name" value="Pept_tRNA_hydro"/>
</dbReference>
<dbReference type="InterPro" id="IPR018171">
    <property type="entry name" value="Pept_tRNA_hydro_CS"/>
</dbReference>
<dbReference type="InterPro" id="IPR036416">
    <property type="entry name" value="Pept_tRNA_hydro_sf"/>
</dbReference>
<dbReference type="NCBIfam" id="TIGR00447">
    <property type="entry name" value="pth"/>
    <property type="match status" value="1"/>
</dbReference>
<dbReference type="PANTHER" id="PTHR17224">
    <property type="entry name" value="PEPTIDYL-TRNA HYDROLASE"/>
    <property type="match status" value="1"/>
</dbReference>
<dbReference type="PANTHER" id="PTHR17224:SF1">
    <property type="entry name" value="PEPTIDYL-TRNA HYDROLASE"/>
    <property type="match status" value="1"/>
</dbReference>
<dbReference type="Pfam" id="PF01195">
    <property type="entry name" value="Pept_tRNA_hydro"/>
    <property type="match status" value="1"/>
</dbReference>
<dbReference type="SUPFAM" id="SSF53178">
    <property type="entry name" value="Peptidyl-tRNA hydrolase-like"/>
    <property type="match status" value="1"/>
</dbReference>
<dbReference type="PROSITE" id="PS01195">
    <property type="entry name" value="PEPT_TRNA_HYDROL_1"/>
    <property type="match status" value="1"/>
</dbReference>
<dbReference type="PROSITE" id="PS01196">
    <property type="entry name" value="PEPT_TRNA_HYDROL_2"/>
    <property type="match status" value="1"/>
</dbReference>
<gene>
    <name evidence="1" type="primary">pth</name>
    <name type="ordered locus">SDY_1253</name>
</gene>
<protein>
    <recommendedName>
        <fullName evidence="1">Peptidyl-tRNA hydrolase</fullName>
        <shortName evidence="1">Pth</shortName>
        <ecNumber evidence="1">3.1.1.29</ecNumber>
    </recommendedName>
</protein>
<organism>
    <name type="scientific">Shigella dysenteriae serotype 1 (strain Sd197)</name>
    <dbReference type="NCBI Taxonomy" id="300267"/>
    <lineage>
        <taxon>Bacteria</taxon>
        <taxon>Pseudomonadati</taxon>
        <taxon>Pseudomonadota</taxon>
        <taxon>Gammaproteobacteria</taxon>
        <taxon>Enterobacterales</taxon>
        <taxon>Enterobacteriaceae</taxon>
        <taxon>Shigella</taxon>
    </lineage>
</organism>
<evidence type="ECO:0000255" key="1">
    <source>
        <dbReference type="HAMAP-Rule" id="MF_00083"/>
    </source>
</evidence>
<comment type="function">
    <text evidence="1">Hydrolyzes ribosome-free peptidyl-tRNAs (with 1 or more amino acids incorporated), which drop off the ribosome during protein synthesis, or as a result of ribosome stalling.</text>
</comment>
<comment type="function">
    <text evidence="1">Catalyzes the release of premature peptidyl moieties from peptidyl-tRNA molecules trapped in stalled 50S ribosomal subunits, and thus maintains levels of free tRNAs and 50S ribosomes.</text>
</comment>
<comment type="catalytic activity">
    <reaction evidence="1">
        <text>an N-acyl-L-alpha-aminoacyl-tRNA + H2O = an N-acyl-L-amino acid + a tRNA + H(+)</text>
        <dbReference type="Rhea" id="RHEA:54448"/>
        <dbReference type="Rhea" id="RHEA-COMP:10123"/>
        <dbReference type="Rhea" id="RHEA-COMP:13883"/>
        <dbReference type="ChEBI" id="CHEBI:15377"/>
        <dbReference type="ChEBI" id="CHEBI:15378"/>
        <dbReference type="ChEBI" id="CHEBI:59874"/>
        <dbReference type="ChEBI" id="CHEBI:78442"/>
        <dbReference type="ChEBI" id="CHEBI:138191"/>
        <dbReference type="EC" id="3.1.1.29"/>
    </reaction>
</comment>
<comment type="subunit">
    <text evidence="1">Monomer.</text>
</comment>
<comment type="subcellular location">
    <subcellularLocation>
        <location evidence="1">Cytoplasm</location>
    </subcellularLocation>
</comment>
<comment type="similarity">
    <text evidence="1">Belongs to the PTH family.</text>
</comment>